<gene>
    <name type="ordered locus">RC0836</name>
</gene>
<accession>Q92HD5</accession>
<evidence type="ECO:0000305" key="1"/>
<reference key="1">
    <citation type="journal article" date="2001" name="Science">
        <title>Mechanisms of evolution in Rickettsia conorii and R. prowazekii.</title>
        <authorList>
            <person name="Ogata H."/>
            <person name="Audic S."/>
            <person name="Renesto-Audiffren P."/>
            <person name="Fournier P.-E."/>
            <person name="Barbe V."/>
            <person name="Samson D."/>
            <person name="Roux V."/>
            <person name="Cossart P."/>
            <person name="Weissenbach J."/>
            <person name="Claverie J.-M."/>
            <person name="Raoult D."/>
        </authorList>
    </citation>
    <scope>NUCLEOTIDE SEQUENCE [LARGE SCALE GENOMIC DNA]</scope>
    <source>
        <strain>ATCC VR-613 / Malish 7</strain>
    </source>
</reference>
<proteinExistence type="uncertain"/>
<dbReference type="EMBL" id="AE006914">
    <property type="protein sequence ID" value="AAL03374.1"/>
    <property type="molecule type" value="Genomic_DNA"/>
</dbReference>
<dbReference type="PIR" id="D97804">
    <property type="entry name" value="D97804"/>
</dbReference>
<dbReference type="SMR" id="Q92HD5"/>
<dbReference type="KEGG" id="rco:RC0836"/>
<dbReference type="PATRIC" id="fig|272944.4.peg.953"/>
<dbReference type="HOGENOM" id="CLU_2384292_0_0_5"/>
<dbReference type="Proteomes" id="UP000000816">
    <property type="component" value="Chromosome"/>
</dbReference>
<comment type="caution">
    <text evidence="1">Could be the product of a pseudogene. It corresponds to positions 609 to 720 of the complete orthologous and probably active protein in R.felis (RF_0890).</text>
</comment>
<name>Y836_RICCN</name>
<protein>
    <recommendedName>
        <fullName>Putative uncharacterized protein RC0836</fullName>
    </recommendedName>
</protein>
<sequence length="112" mass="13051">MQPDYFTADYDVENMHVNMNKHYILEEALKLNLPKKIVPIPHKITLPKINLATAIDTSKYNDLQNKVLSKFQDIIDTHNETNEEELLAYEQEIFLELVKDPKTIEKLKVIVG</sequence>
<feature type="chain" id="PRO_0000284430" description="Putative uncharacterized protein RC0836">
    <location>
        <begin position="1"/>
        <end position="112"/>
    </location>
</feature>
<organism>
    <name type="scientific">Rickettsia conorii (strain ATCC VR-613 / Malish 7)</name>
    <dbReference type="NCBI Taxonomy" id="272944"/>
    <lineage>
        <taxon>Bacteria</taxon>
        <taxon>Pseudomonadati</taxon>
        <taxon>Pseudomonadota</taxon>
        <taxon>Alphaproteobacteria</taxon>
        <taxon>Rickettsiales</taxon>
        <taxon>Rickettsiaceae</taxon>
        <taxon>Rickettsieae</taxon>
        <taxon>Rickettsia</taxon>
        <taxon>spotted fever group</taxon>
    </lineage>
</organism>